<accession>B7NMF2</accession>
<feature type="chain" id="PRO_1000117485" description="3-dehydroquinate synthase">
    <location>
        <begin position="1"/>
        <end position="362"/>
    </location>
</feature>
<feature type="binding site" evidence="1">
    <location>
        <begin position="71"/>
        <end position="76"/>
    </location>
    <ligand>
        <name>NAD(+)</name>
        <dbReference type="ChEBI" id="CHEBI:57540"/>
    </ligand>
</feature>
<feature type="binding site" evidence="1">
    <location>
        <begin position="105"/>
        <end position="109"/>
    </location>
    <ligand>
        <name>NAD(+)</name>
        <dbReference type="ChEBI" id="CHEBI:57540"/>
    </ligand>
</feature>
<feature type="binding site" evidence="1">
    <location>
        <begin position="129"/>
        <end position="130"/>
    </location>
    <ligand>
        <name>NAD(+)</name>
        <dbReference type="ChEBI" id="CHEBI:57540"/>
    </ligand>
</feature>
<feature type="binding site" evidence="1">
    <location>
        <position position="142"/>
    </location>
    <ligand>
        <name>NAD(+)</name>
        <dbReference type="ChEBI" id="CHEBI:57540"/>
    </ligand>
</feature>
<feature type="binding site" evidence="1">
    <location>
        <position position="151"/>
    </location>
    <ligand>
        <name>NAD(+)</name>
        <dbReference type="ChEBI" id="CHEBI:57540"/>
    </ligand>
</feature>
<feature type="binding site" evidence="1">
    <location>
        <begin position="169"/>
        <end position="172"/>
    </location>
    <ligand>
        <name>NAD(+)</name>
        <dbReference type="ChEBI" id="CHEBI:57540"/>
    </ligand>
</feature>
<feature type="binding site" evidence="1">
    <location>
        <position position="184"/>
    </location>
    <ligand>
        <name>Zn(2+)</name>
        <dbReference type="ChEBI" id="CHEBI:29105"/>
    </ligand>
</feature>
<feature type="binding site" evidence="1">
    <location>
        <position position="247"/>
    </location>
    <ligand>
        <name>Zn(2+)</name>
        <dbReference type="ChEBI" id="CHEBI:29105"/>
    </ligand>
</feature>
<feature type="binding site" evidence="1">
    <location>
        <position position="264"/>
    </location>
    <ligand>
        <name>Zn(2+)</name>
        <dbReference type="ChEBI" id="CHEBI:29105"/>
    </ligand>
</feature>
<sequence length="362" mass="38854">MERIVVTLGERSYPITIASGLFNEPASFLPLKSGEQVMLVTNETLAPLYLDKVRGVLEQAGVNVDSVILPDGEQYKSLAVLDTVFTALLQKPHGRDTTLVALGGGVVGDLTGFAAASYQRGVRFIQVPTTLLSQVDSSVGGKTAVNHPLGKNMIGAFYQPASVVVDLDCLKTLPPRELASGLAEVIKYGIILDGAFFNWLEENLDALLRLDGPAMAYCIRRCCELKAEVVAADERETGLRALLNLGHTFGHAIEAEMGYGNWLHGEAVAAGMVMAARTSERLGQFSSAETQRIITLLTRAGLPVNGPREMSAQAYLPHMLRDKKVLAGEMRLILPLAIGKSEVRSGVSHELVLNAIADCQSA</sequence>
<reference key="1">
    <citation type="journal article" date="2009" name="PLoS Genet.">
        <title>Organised genome dynamics in the Escherichia coli species results in highly diverse adaptive paths.</title>
        <authorList>
            <person name="Touchon M."/>
            <person name="Hoede C."/>
            <person name="Tenaillon O."/>
            <person name="Barbe V."/>
            <person name="Baeriswyl S."/>
            <person name="Bidet P."/>
            <person name="Bingen E."/>
            <person name="Bonacorsi S."/>
            <person name="Bouchier C."/>
            <person name="Bouvet O."/>
            <person name="Calteau A."/>
            <person name="Chiapello H."/>
            <person name="Clermont O."/>
            <person name="Cruveiller S."/>
            <person name="Danchin A."/>
            <person name="Diard M."/>
            <person name="Dossat C."/>
            <person name="Karoui M.E."/>
            <person name="Frapy E."/>
            <person name="Garry L."/>
            <person name="Ghigo J.M."/>
            <person name="Gilles A.M."/>
            <person name="Johnson J."/>
            <person name="Le Bouguenec C."/>
            <person name="Lescat M."/>
            <person name="Mangenot S."/>
            <person name="Martinez-Jehanne V."/>
            <person name="Matic I."/>
            <person name="Nassif X."/>
            <person name="Oztas S."/>
            <person name="Petit M.A."/>
            <person name="Pichon C."/>
            <person name="Rouy Z."/>
            <person name="Ruf C.S."/>
            <person name="Schneider D."/>
            <person name="Tourret J."/>
            <person name="Vacherie B."/>
            <person name="Vallenet D."/>
            <person name="Medigue C."/>
            <person name="Rocha E.P.C."/>
            <person name="Denamur E."/>
        </authorList>
    </citation>
    <scope>NUCLEOTIDE SEQUENCE [LARGE SCALE GENOMIC DNA]</scope>
    <source>
        <strain>IAI39 / ExPEC</strain>
    </source>
</reference>
<dbReference type="EC" id="4.2.3.4" evidence="1"/>
<dbReference type="EMBL" id="CU928164">
    <property type="protein sequence ID" value="CAR19980.1"/>
    <property type="molecule type" value="Genomic_DNA"/>
</dbReference>
<dbReference type="RefSeq" id="WP_000439850.1">
    <property type="nucleotide sequence ID" value="NC_011750.1"/>
</dbReference>
<dbReference type="RefSeq" id="YP_002409761.1">
    <property type="nucleotide sequence ID" value="NC_011750.1"/>
</dbReference>
<dbReference type="SMR" id="B7NMF2"/>
<dbReference type="STRING" id="585057.ECIAI39_3867"/>
<dbReference type="KEGG" id="ect:ECIAI39_3867"/>
<dbReference type="PATRIC" id="fig|585057.6.peg.4003"/>
<dbReference type="HOGENOM" id="CLU_001201_0_2_6"/>
<dbReference type="UniPathway" id="UPA00053">
    <property type="reaction ID" value="UER00085"/>
</dbReference>
<dbReference type="Proteomes" id="UP000000749">
    <property type="component" value="Chromosome"/>
</dbReference>
<dbReference type="GO" id="GO:0005737">
    <property type="term" value="C:cytoplasm"/>
    <property type="evidence" value="ECO:0007669"/>
    <property type="project" value="UniProtKB-SubCell"/>
</dbReference>
<dbReference type="GO" id="GO:0003856">
    <property type="term" value="F:3-dehydroquinate synthase activity"/>
    <property type="evidence" value="ECO:0007669"/>
    <property type="project" value="UniProtKB-UniRule"/>
</dbReference>
<dbReference type="GO" id="GO:0046872">
    <property type="term" value="F:metal ion binding"/>
    <property type="evidence" value="ECO:0007669"/>
    <property type="project" value="UniProtKB-KW"/>
</dbReference>
<dbReference type="GO" id="GO:0000166">
    <property type="term" value="F:nucleotide binding"/>
    <property type="evidence" value="ECO:0007669"/>
    <property type="project" value="UniProtKB-KW"/>
</dbReference>
<dbReference type="GO" id="GO:0008652">
    <property type="term" value="P:amino acid biosynthetic process"/>
    <property type="evidence" value="ECO:0007669"/>
    <property type="project" value="UniProtKB-KW"/>
</dbReference>
<dbReference type="GO" id="GO:0009073">
    <property type="term" value="P:aromatic amino acid family biosynthetic process"/>
    <property type="evidence" value="ECO:0007669"/>
    <property type="project" value="UniProtKB-KW"/>
</dbReference>
<dbReference type="GO" id="GO:0009423">
    <property type="term" value="P:chorismate biosynthetic process"/>
    <property type="evidence" value="ECO:0007669"/>
    <property type="project" value="UniProtKB-UniRule"/>
</dbReference>
<dbReference type="CDD" id="cd08195">
    <property type="entry name" value="DHQS"/>
    <property type="match status" value="1"/>
</dbReference>
<dbReference type="FunFam" id="1.20.1090.10:FF:000002">
    <property type="entry name" value="3-dehydroquinate synthase"/>
    <property type="match status" value="1"/>
</dbReference>
<dbReference type="FunFam" id="3.40.50.1970:FF:000001">
    <property type="entry name" value="3-dehydroquinate synthase"/>
    <property type="match status" value="1"/>
</dbReference>
<dbReference type="Gene3D" id="3.40.50.1970">
    <property type="match status" value="1"/>
</dbReference>
<dbReference type="Gene3D" id="1.20.1090.10">
    <property type="entry name" value="Dehydroquinate synthase-like - alpha domain"/>
    <property type="match status" value="1"/>
</dbReference>
<dbReference type="HAMAP" id="MF_00110">
    <property type="entry name" value="DHQ_synthase"/>
    <property type="match status" value="1"/>
</dbReference>
<dbReference type="InterPro" id="IPR050071">
    <property type="entry name" value="Dehydroquinate_synthase"/>
</dbReference>
<dbReference type="InterPro" id="IPR016037">
    <property type="entry name" value="DHQ_synth_AroB"/>
</dbReference>
<dbReference type="InterPro" id="IPR030963">
    <property type="entry name" value="DHQ_synth_fam"/>
</dbReference>
<dbReference type="InterPro" id="IPR030960">
    <property type="entry name" value="DHQS/DOIS_N"/>
</dbReference>
<dbReference type="InterPro" id="IPR056179">
    <property type="entry name" value="DHQS_C"/>
</dbReference>
<dbReference type="NCBIfam" id="TIGR01357">
    <property type="entry name" value="aroB"/>
    <property type="match status" value="1"/>
</dbReference>
<dbReference type="PANTHER" id="PTHR43622">
    <property type="entry name" value="3-DEHYDROQUINATE SYNTHASE"/>
    <property type="match status" value="1"/>
</dbReference>
<dbReference type="PANTHER" id="PTHR43622:SF7">
    <property type="entry name" value="3-DEHYDROQUINATE SYNTHASE, CHLOROPLASTIC"/>
    <property type="match status" value="1"/>
</dbReference>
<dbReference type="Pfam" id="PF01761">
    <property type="entry name" value="DHQ_synthase"/>
    <property type="match status" value="1"/>
</dbReference>
<dbReference type="Pfam" id="PF24621">
    <property type="entry name" value="DHQS_C"/>
    <property type="match status" value="1"/>
</dbReference>
<dbReference type="PIRSF" id="PIRSF001455">
    <property type="entry name" value="DHQ_synth"/>
    <property type="match status" value="1"/>
</dbReference>
<dbReference type="SUPFAM" id="SSF56796">
    <property type="entry name" value="Dehydroquinate synthase-like"/>
    <property type="match status" value="1"/>
</dbReference>
<organism>
    <name type="scientific">Escherichia coli O7:K1 (strain IAI39 / ExPEC)</name>
    <dbReference type="NCBI Taxonomy" id="585057"/>
    <lineage>
        <taxon>Bacteria</taxon>
        <taxon>Pseudomonadati</taxon>
        <taxon>Pseudomonadota</taxon>
        <taxon>Gammaproteobacteria</taxon>
        <taxon>Enterobacterales</taxon>
        <taxon>Enterobacteriaceae</taxon>
        <taxon>Escherichia</taxon>
    </lineage>
</organism>
<comment type="function">
    <text evidence="1">Catalyzes the conversion of 3-deoxy-D-arabino-heptulosonate 7-phosphate (DAHP) to dehydroquinate (DHQ).</text>
</comment>
<comment type="catalytic activity">
    <reaction evidence="1">
        <text>7-phospho-2-dehydro-3-deoxy-D-arabino-heptonate = 3-dehydroquinate + phosphate</text>
        <dbReference type="Rhea" id="RHEA:21968"/>
        <dbReference type="ChEBI" id="CHEBI:32364"/>
        <dbReference type="ChEBI" id="CHEBI:43474"/>
        <dbReference type="ChEBI" id="CHEBI:58394"/>
        <dbReference type="EC" id="4.2.3.4"/>
    </reaction>
</comment>
<comment type="cofactor">
    <cofactor evidence="1">
        <name>Co(2+)</name>
        <dbReference type="ChEBI" id="CHEBI:48828"/>
    </cofactor>
    <cofactor evidence="1">
        <name>Zn(2+)</name>
        <dbReference type="ChEBI" id="CHEBI:29105"/>
    </cofactor>
    <text evidence="1">Binds 1 divalent metal cation per subunit. Can use either Co(2+) or Zn(2+).</text>
</comment>
<comment type="cofactor">
    <cofactor evidence="1">
        <name>NAD(+)</name>
        <dbReference type="ChEBI" id="CHEBI:57540"/>
    </cofactor>
</comment>
<comment type="pathway">
    <text evidence="1">Metabolic intermediate biosynthesis; chorismate biosynthesis; chorismate from D-erythrose 4-phosphate and phosphoenolpyruvate: step 2/7.</text>
</comment>
<comment type="subcellular location">
    <subcellularLocation>
        <location evidence="1">Cytoplasm</location>
    </subcellularLocation>
</comment>
<comment type="similarity">
    <text evidence="1">Belongs to the sugar phosphate cyclases superfamily. Dehydroquinate synthase family.</text>
</comment>
<keyword id="KW-0028">Amino-acid biosynthesis</keyword>
<keyword id="KW-0057">Aromatic amino acid biosynthesis</keyword>
<keyword id="KW-0170">Cobalt</keyword>
<keyword id="KW-0963">Cytoplasm</keyword>
<keyword id="KW-0456">Lyase</keyword>
<keyword id="KW-0479">Metal-binding</keyword>
<keyword id="KW-0520">NAD</keyword>
<keyword id="KW-0547">Nucleotide-binding</keyword>
<keyword id="KW-0862">Zinc</keyword>
<protein>
    <recommendedName>
        <fullName evidence="1">3-dehydroquinate synthase</fullName>
        <shortName evidence="1">DHQS</shortName>
        <ecNumber evidence="1">4.2.3.4</ecNumber>
    </recommendedName>
</protein>
<name>AROB_ECO7I</name>
<proteinExistence type="inferred from homology"/>
<gene>
    <name evidence="1" type="primary">aroB</name>
    <name type="ordered locus">ECIAI39_3867</name>
</gene>
<evidence type="ECO:0000255" key="1">
    <source>
        <dbReference type="HAMAP-Rule" id="MF_00110"/>
    </source>
</evidence>